<sequence>MASERDPLLPVHGEGPESPSRRNWKTWIKHGILLILVLSTVIFFYFFSSHKSKGTNEKPKFVIMMVSDGMGPGSLSMTRSFVETLNDKEGYRLPLDEHLIGSSRTRSSSSLITDSAAGATAFSCANKTYNGAVGVLDNEKPCGTILEAAKEAGYLTGIVVTSRVTDATPASFSAHAANRFMQDLIAEYQVGMGPLGRSVDLLFGGGLCSFLPKSTYRSCRSDNLDLLKYARKKEGFQILLNRTDFDELSNAQLPLLGLFSDYHLSYDIDYQPEVQPKLSEMVETALDVLLNATNEDTSKGFFLLIEGSRIDMASHNNDPIAHVYEVMEYNRAFEIASAFVEKNGGSLISTSDHETGGLTVGRQVSKKYPEYLWKPQVLSLALHSIEYLASAIVNHNQNTLLPYIEQFVLPAIGIPDPNPKQIHDIYVARHNIFNLINVLSDIVSVEAQIGWTTHGHTAVDVNVYGVGEVTEHLRGNMENIEIGQFMEIYLNVSLSDVTEKLKDAPIHGAPDRPSLVETSFSDRLVGFGADLF</sequence>
<feature type="chain" id="PRO_0000186165" description="Alkaline phosphatase">
    <location>
        <begin position="1"/>
        <end position="532"/>
    </location>
</feature>
<feature type="transmembrane region" description="Helical; Signal-anchor for type II membrane protein" evidence="2">
    <location>
        <begin position="27"/>
        <end position="47"/>
    </location>
</feature>
<feature type="region of interest" description="Disordered" evidence="4">
    <location>
        <begin position="1"/>
        <end position="20"/>
    </location>
</feature>
<feature type="active site" description="Phosphoserine intermediate" evidence="3">
    <location>
        <position position="115"/>
    </location>
</feature>
<feature type="binding site" evidence="1">
    <location>
        <position position="68"/>
    </location>
    <ligand>
        <name>Mg(2+)</name>
        <dbReference type="ChEBI" id="CHEBI:18420"/>
    </ligand>
</feature>
<feature type="binding site" evidence="1">
    <location>
        <position position="68"/>
    </location>
    <ligand>
        <name>Zn(2+)</name>
        <dbReference type="ChEBI" id="CHEBI:29105"/>
        <label>2</label>
    </ligand>
</feature>
<feature type="binding site" evidence="1">
    <location>
        <position position="166"/>
    </location>
    <ligand>
        <name>Mg(2+)</name>
        <dbReference type="ChEBI" id="CHEBI:18420"/>
    </ligand>
</feature>
<feature type="binding site" evidence="1">
    <location>
        <position position="168"/>
    </location>
    <ligand>
        <name>Mg(2+)</name>
        <dbReference type="ChEBI" id="CHEBI:18420"/>
    </ligand>
</feature>
<feature type="binding site" evidence="1">
    <location>
        <position position="306"/>
    </location>
    <ligand>
        <name>Mg(2+)</name>
        <dbReference type="ChEBI" id="CHEBI:18420"/>
    </ligand>
</feature>
<feature type="binding site" evidence="1">
    <location>
        <position position="311"/>
    </location>
    <ligand>
        <name>Zn(2+)</name>
        <dbReference type="ChEBI" id="CHEBI:29105"/>
        <label>1</label>
    </ligand>
</feature>
<feature type="binding site" evidence="1">
    <location>
        <position position="315"/>
    </location>
    <ligand>
        <name>Zn(2+)</name>
        <dbReference type="ChEBI" id="CHEBI:29105"/>
        <label>1</label>
    </ligand>
</feature>
<feature type="binding site" evidence="1">
    <location>
        <position position="352"/>
    </location>
    <ligand>
        <name>Zn(2+)</name>
        <dbReference type="ChEBI" id="CHEBI:29105"/>
        <label>2</label>
    </ligand>
</feature>
<feature type="binding site" evidence="1">
    <location>
        <position position="353"/>
    </location>
    <ligand>
        <name>Zn(2+)</name>
        <dbReference type="ChEBI" id="CHEBI:29105"/>
        <label>2</label>
    </ligand>
</feature>
<feature type="binding site" evidence="1">
    <location>
        <position position="456"/>
    </location>
    <ligand>
        <name>Zn(2+)</name>
        <dbReference type="ChEBI" id="CHEBI:29105"/>
        <label>1</label>
    </ligand>
</feature>
<feature type="sequence conflict" description="In Ref. 1; AAK07179." evidence="5" ref="1">
    <original>PS</original>
    <variation>HC</variation>
    <location>
        <begin position="513"/>
        <end position="514"/>
    </location>
</feature>
<organism>
    <name type="scientific">Schizosaccharomyces pombe (strain 972 / ATCC 24843)</name>
    <name type="common">Fission yeast</name>
    <dbReference type="NCBI Taxonomy" id="284812"/>
    <lineage>
        <taxon>Eukaryota</taxon>
        <taxon>Fungi</taxon>
        <taxon>Dikarya</taxon>
        <taxon>Ascomycota</taxon>
        <taxon>Taphrinomycotina</taxon>
        <taxon>Schizosaccharomycetes</taxon>
        <taxon>Schizosaccharomycetales</taxon>
        <taxon>Schizosaccharomycetaceae</taxon>
        <taxon>Schizosaccharomyces</taxon>
    </lineage>
</organism>
<reference key="1">
    <citation type="submission" date="2000-10" db="EMBL/GenBank/DDBJ databases">
        <title>Characterization of alkaline phosphatase gene from Schizosaccharomyces pombe.</title>
        <authorList>
            <person name="Kang S.-W."/>
            <person name="Lim C.-J."/>
        </authorList>
    </citation>
    <scope>NUCLEOTIDE SEQUENCE [GENOMIC DNA]</scope>
</reference>
<reference key="2">
    <citation type="journal article" date="2002" name="Nature">
        <title>The genome sequence of Schizosaccharomyces pombe.</title>
        <authorList>
            <person name="Wood V."/>
            <person name="Gwilliam R."/>
            <person name="Rajandream M.A."/>
            <person name="Lyne M.H."/>
            <person name="Lyne R."/>
            <person name="Stewart A."/>
            <person name="Sgouros J.G."/>
            <person name="Peat N."/>
            <person name="Hayles J."/>
            <person name="Baker S.G."/>
            <person name="Basham D."/>
            <person name="Bowman S."/>
            <person name="Brooks K."/>
            <person name="Brown D."/>
            <person name="Brown S."/>
            <person name="Chillingworth T."/>
            <person name="Churcher C.M."/>
            <person name="Collins M."/>
            <person name="Connor R."/>
            <person name="Cronin A."/>
            <person name="Davis P."/>
            <person name="Feltwell T."/>
            <person name="Fraser A."/>
            <person name="Gentles S."/>
            <person name="Goble A."/>
            <person name="Hamlin N."/>
            <person name="Harris D.E."/>
            <person name="Hidalgo J."/>
            <person name="Hodgson G."/>
            <person name="Holroyd S."/>
            <person name="Hornsby T."/>
            <person name="Howarth S."/>
            <person name="Huckle E.J."/>
            <person name="Hunt S."/>
            <person name="Jagels K."/>
            <person name="James K.D."/>
            <person name="Jones L."/>
            <person name="Jones M."/>
            <person name="Leather S."/>
            <person name="McDonald S."/>
            <person name="McLean J."/>
            <person name="Mooney P."/>
            <person name="Moule S."/>
            <person name="Mungall K.L."/>
            <person name="Murphy L.D."/>
            <person name="Niblett D."/>
            <person name="Odell C."/>
            <person name="Oliver K."/>
            <person name="O'Neil S."/>
            <person name="Pearson D."/>
            <person name="Quail M.A."/>
            <person name="Rabbinowitsch E."/>
            <person name="Rutherford K.M."/>
            <person name="Rutter S."/>
            <person name="Saunders D."/>
            <person name="Seeger K."/>
            <person name="Sharp S."/>
            <person name="Skelton J."/>
            <person name="Simmonds M.N."/>
            <person name="Squares R."/>
            <person name="Squares S."/>
            <person name="Stevens K."/>
            <person name="Taylor K."/>
            <person name="Taylor R.G."/>
            <person name="Tivey A."/>
            <person name="Walsh S.V."/>
            <person name="Warren T."/>
            <person name="Whitehead S."/>
            <person name="Woodward J.R."/>
            <person name="Volckaert G."/>
            <person name="Aert R."/>
            <person name="Robben J."/>
            <person name="Grymonprez B."/>
            <person name="Weltjens I."/>
            <person name="Vanstreels E."/>
            <person name="Rieger M."/>
            <person name="Schaefer M."/>
            <person name="Mueller-Auer S."/>
            <person name="Gabel C."/>
            <person name="Fuchs M."/>
            <person name="Duesterhoeft A."/>
            <person name="Fritzc C."/>
            <person name="Holzer E."/>
            <person name="Moestl D."/>
            <person name="Hilbert H."/>
            <person name="Borzym K."/>
            <person name="Langer I."/>
            <person name="Beck A."/>
            <person name="Lehrach H."/>
            <person name="Reinhardt R."/>
            <person name="Pohl T.M."/>
            <person name="Eger P."/>
            <person name="Zimmermann W."/>
            <person name="Wedler H."/>
            <person name="Wambutt R."/>
            <person name="Purnelle B."/>
            <person name="Goffeau A."/>
            <person name="Cadieu E."/>
            <person name="Dreano S."/>
            <person name="Gloux S."/>
            <person name="Lelaure V."/>
            <person name="Mottier S."/>
            <person name="Galibert F."/>
            <person name="Aves S.J."/>
            <person name="Xiang Z."/>
            <person name="Hunt C."/>
            <person name="Moore K."/>
            <person name="Hurst S.M."/>
            <person name="Lucas M."/>
            <person name="Rochet M."/>
            <person name="Gaillardin C."/>
            <person name="Tallada V.A."/>
            <person name="Garzon A."/>
            <person name="Thode G."/>
            <person name="Daga R.R."/>
            <person name="Cruzado L."/>
            <person name="Jimenez J."/>
            <person name="Sanchez M."/>
            <person name="del Rey F."/>
            <person name="Benito J."/>
            <person name="Dominguez A."/>
            <person name="Revuelta J.L."/>
            <person name="Moreno S."/>
            <person name="Armstrong J."/>
            <person name="Forsburg S.L."/>
            <person name="Cerutti L."/>
            <person name="Lowe T."/>
            <person name="McCombie W.R."/>
            <person name="Paulsen I."/>
            <person name="Potashkin J."/>
            <person name="Shpakovski G.V."/>
            <person name="Ussery D."/>
            <person name="Barrell B.G."/>
            <person name="Nurse P."/>
        </authorList>
    </citation>
    <scope>NUCLEOTIDE SEQUENCE [LARGE SCALE GENOMIC DNA]</scope>
    <source>
        <strain>972 / ATCC 24843</strain>
    </source>
</reference>
<gene>
    <name type="ORF">SPBC14F5.13c</name>
</gene>
<comment type="catalytic activity">
    <reaction evidence="3">
        <text>a phosphate monoester + H2O = an alcohol + phosphate</text>
        <dbReference type="Rhea" id="RHEA:15017"/>
        <dbReference type="ChEBI" id="CHEBI:15377"/>
        <dbReference type="ChEBI" id="CHEBI:30879"/>
        <dbReference type="ChEBI" id="CHEBI:43474"/>
        <dbReference type="ChEBI" id="CHEBI:67140"/>
        <dbReference type="EC" id="3.1.3.1"/>
    </reaction>
</comment>
<comment type="cofactor">
    <cofactor evidence="1">
        <name>Mg(2+)</name>
        <dbReference type="ChEBI" id="CHEBI:18420"/>
    </cofactor>
    <text evidence="1">Binds 1 Mg(2+) ion.</text>
</comment>
<comment type="cofactor">
    <cofactor evidence="1">
        <name>Zn(2+)</name>
        <dbReference type="ChEBI" id="CHEBI:29105"/>
    </cofactor>
    <text evidence="1">Binds 2 Zn(2+) ions.</text>
</comment>
<comment type="subcellular location">
    <subcellularLocation>
        <location evidence="5">Membrane</location>
        <topology evidence="5">Single-pass type II membrane protein</topology>
    </subcellularLocation>
</comment>
<comment type="similarity">
    <text evidence="5">Belongs to the alkaline phosphatase family.</text>
</comment>
<protein>
    <recommendedName>
        <fullName>Alkaline phosphatase</fullName>
        <ecNumber>3.1.3.1</ecNumber>
    </recommendedName>
</protein>
<keyword id="KW-0378">Hydrolase</keyword>
<keyword id="KW-0460">Magnesium</keyword>
<keyword id="KW-0472">Membrane</keyword>
<keyword id="KW-0479">Metal-binding</keyword>
<keyword id="KW-0597">Phosphoprotein</keyword>
<keyword id="KW-1185">Reference proteome</keyword>
<keyword id="KW-0735">Signal-anchor</keyword>
<keyword id="KW-0812">Transmembrane</keyword>
<keyword id="KW-1133">Transmembrane helix</keyword>
<keyword id="KW-0862">Zinc</keyword>
<proteinExistence type="inferred from homology"/>
<name>PPB_SCHPO</name>
<accession>O60109</accession>
<accession>Q9C427</accession>
<evidence type="ECO:0000250" key="1"/>
<evidence type="ECO:0000255" key="2"/>
<evidence type="ECO:0000255" key="3">
    <source>
        <dbReference type="PROSITE-ProRule" id="PRU10042"/>
    </source>
</evidence>
<evidence type="ECO:0000256" key="4">
    <source>
        <dbReference type="SAM" id="MobiDB-lite"/>
    </source>
</evidence>
<evidence type="ECO:0000305" key="5"/>
<dbReference type="EC" id="3.1.3.1"/>
<dbReference type="EMBL" id="AF316541">
    <property type="protein sequence ID" value="AAK07179.1"/>
    <property type="molecule type" value="Genomic_DNA"/>
</dbReference>
<dbReference type="EMBL" id="CU329671">
    <property type="protein sequence ID" value="CAA19331.1"/>
    <property type="molecule type" value="Genomic_DNA"/>
</dbReference>
<dbReference type="PIR" id="T39459">
    <property type="entry name" value="T39459"/>
</dbReference>
<dbReference type="SMR" id="O60109"/>
<dbReference type="BioGRID" id="276470">
    <property type="interactions" value="16"/>
</dbReference>
<dbReference type="FunCoup" id="O60109">
    <property type="interactions" value="133"/>
</dbReference>
<dbReference type="STRING" id="284812.O60109"/>
<dbReference type="iPTMnet" id="O60109"/>
<dbReference type="PaxDb" id="4896-SPBC14F5.13c.1"/>
<dbReference type="EnsemblFungi" id="SPBC14F5.13c.1">
    <property type="protein sequence ID" value="SPBC14F5.13c.1:pep"/>
    <property type="gene ID" value="SPBC14F5.13c"/>
</dbReference>
<dbReference type="KEGG" id="spo:2539926"/>
<dbReference type="PomBase" id="SPBC14F5.13c"/>
<dbReference type="VEuPathDB" id="FungiDB:SPBC14F5.13c"/>
<dbReference type="eggNOG" id="KOG4126">
    <property type="taxonomic scope" value="Eukaryota"/>
</dbReference>
<dbReference type="HOGENOM" id="CLU_008539_6_0_1"/>
<dbReference type="InParanoid" id="O60109"/>
<dbReference type="OMA" id="KAAGYMT"/>
<dbReference type="PhylomeDB" id="O60109"/>
<dbReference type="PRO" id="PR:O60109"/>
<dbReference type="Proteomes" id="UP000002485">
    <property type="component" value="Chromosome II"/>
</dbReference>
<dbReference type="GO" id="GO:0000324">
    <property type="term" value="C:fungal-type vacuole"/>
    <property type="evidence" value="ECO:0000314"/>
    <property type="project" value="PomBase"/>
</dbReference>
<dbReference type="GO" id="GO:0000329">
    <property type="term" value="C:fungal-type vacuole membrane"/>
    <property type="evidence" value="ECO:0000318"/>
    <property type="project" value="GO_Central"/>
</dbReference>
<dbReference type="GO" id="GO:0004035">
    <property type="term" value="F:alkaline phosphatase activity"/>
    <property type="evidence" value="ECO:0000314"/>
    <property type="project" value="PomBase"/>
</dbReference>
<dbReference type="GO" id="GO:0046872">
    <property type="term" value="F:metal ion binding"/>
    <property type="evidence" value="ECO:0007669"/>
    <property type="project" value="UniProtKB-KW"/>
</dbReference>
<dbReference type="GO" id="GO:0106219">
    <property type="term" value="F:zinc ion sensor activity"/>
    <property type="evidence" value="ECO:0000314"/>
    <property type="project" value="PomBase"/>
</dbReference>
<dbReference type="GO" id="GO:0046496">
    <property type="term" value="P:nicotinamide nucleotide metabolic process"/>
    <property type="evidence" value="ECO:0000266"/>
    <property type="project" value="PomBase"/>
</dbReference>
<dbReference type="CDD" id="cd16012">
    <property type="entry name" value="ALP"/>
    <property type="match status" value="1"/>
</dbReference>
<dbReference type="FunFam" id="1.10.60.40:FF:000002">
    <property type="entry name" value="Alkaline phosphatase"/>
    <property type="match status" value="1"/>
</dbReference>
<dbReference type="FunFam" id="3.40.720.10:FF:000063">
    <property type="entry name" value="Alkaline phosphatase"/>
    <property type="match status" value="1"/>
</dbReference>
<dbReference type="Gene3D" id="1.10.60.40">
    <property type="match status" value="1"/>
</dbReference>
<dbReference type="Gene3D" id="3.40.720.10">
    <property type="entry name" value="Alkaline Phosphatase, subunit A"/>
    <property type="match status" value="1"/>
</dbReference>
<dbReference type="InterPro" id="IPR001952">
    <property type="entry name" value="Alkaline_phosphatase"/>
</dbReference>
<dbReference type="InterPro" id="IPR018299">
    <property type="entry name" value="Alkaline_phosphatase_AS"/>
</dbReference>
<dbReference type="InterPro" id="IPR017850">
    <property type="entry name" value="Alkaline_phosphatase_core_sf"/>
</dbReference>
<dbReference type="PANTHER" id="PTHR11596">
    <property type="entry name" value="ALKALINE PHOSPHATASE"/>
    <property type="match status" value="1"/>
</dbReference>
<dbReference type="PANTHER" id="PTHR11596:SF5">
    <property type="entry name" value="ALKALINE PHOSPHATASE"/>
    <property type="match status" value="1"/>
</dbReference>
<dbReference type="Pfam" id="PF00245">
    <property type="entry name" value="Alk_phosphatase"/>
    <property type="match status" value="1"/>
</dbReference>
<dbReference type="PRINTS" id="PR00113">
    <property type="entry name" value="ALKPHPHTASE"/>
</dbReference>
<dbReference type="SMART" id="SM00098">
    <property type="entry name" value="alkPPc"/>
    <property type="match status" value="1"/>
</dbReference>
<dbReference type="SUPFAM" id="SSF53649">
    <property type="entry name" value="Alkaline phosphatase-like"/>
    <property type="match status" value="1"/>
</dbReference>
<dbReference type="PROSITE" id="PS00123">
    <property type="entry name" value="ALKALINE_PHOSPHATASE"/>
    <property type="match status" value="1"/>
</dbReference>